<reference key="1">
    <citation type="journal article" date="2004" name="Proc. Natl. Acad. Sci. U.S.A.">
        <title>Genome sequence of the enterobacterial phytopathogen Erwinia carotovora subsp. atroseptica and characterization of virulence factors.</title>
        <authorList>
            <person name="Bell K.S."/>
            <person name="Sebaihia M."/>
            <person name="Pritchard L."/>
            <person name="Holden M.T.G."/>
            <person name="Hyman L.J."/>
            <person name="Holeva M.C."/>
            <person name="Thomson N.R."/>
            <person name="Bentley S.D."/>
            <person name="Churcher L.J.C."/>
            <person name="Mungall K."/>
            <person name="Atkin R."/>
            <person name="Bason N."/>
            <person name="Brooks K."/>
            <person name="Chillingworth T."/>
            <person name="Clark K."/>
            <person name="Doggett J."/>
            <person name="Fraser A."/>
            <person name="Hance Z."/>
            <person name="Hauser H."/>
            <person name="Jagels K."/>
            <person name="Moule S."/>
            <person name="Norbertczak H."/>
            <person name="Ormond D."/>
            <person name="Price C."/>
            <person name="Quail M.A."/>
            <person name="Sanders M."/>
            <person name="Walker D."/>
            <person name="Whitehead S."/>
            <person name="Salmond G.P.C."/>
            <person name="Birch P.R.J."/>
            <person name="Parkhill J."/>
            <person name="Toth I.K."/>
        </authorList>
    </citation>
    <scope>NUCLEOTIDE SEQUENCE [LARGE SCALE GENOMIC DNA]</scope>
    <source>
        <strain>SCRI 1043 / ATCC BAA-672</strain>
    </source>
</reference>
<evidence type="ECO:0000255" key="1">
    <source>
        <dbReference type="HAMAP-Rule" id="MF_01313"/>
    </source>
</evidence>
<dbReference type="EC" id="1.18.1.-" evidence="1"/>
<dbReference type="EMBL" id="BX950851">
    <property type="protein sequence ID" value="CAG73813.1"/>
    <property type="molecule type" value="Genomic_DNA"/>
</dbReference>
<dbReference type="SMR" id="Q6D8S1"/>
<dbReference type="STRING" id="218491.ECA0901"/>
<dbReference type="KEGG" id="eca:ECA0901"/>
<dbReference type="eggNOG" id="COG0446">
    <property type="taxonomic scope" value="Bacteria"/>
</dbReference>
<dbReference type="HOGENOM" id="CLU_003291_4_4_6"/>
<dbReference type="UniPathway" id="UPA00638"/>
<dbReference type="Proteomes" id="UP000007966">
    <property type="component" value="Chromosome"/>
</dbReference>
<dbReference type="GO" id="GO:0005737">
    <property type="term" value="C:cytoplasm"/>
    <property type="evidence" value="ECO:0007669"/>
    <property type="project" value="UniProtKB-SubCell"/>
</dbReference>
<dbReference type="GO" id="GO:0016731">
    <property type="term" value="F:oxidoreductase activity, acting on iron-sulfur proteins as donors, NAD or NADP as acceptor"/>
    <property type="evidence" value="ECO:0007669"/>
    <property type="project" value="UniProtKB-UniRule"/>
</dbReference>
<dbReference type="Gene3D" id="3.30.390.120">
    <property type="match status" value="1"/>
</dbReference>
<dbReference type="Gene3D" id="3.50.50.60">
    <property type="entry name" value="FAD/NAD(P)-binding domain"/>
    <property type="match status" value="2"/>
</dbReference>
<dbReference type="HAMAP" id="MF_01313">
    <property type="entry name" value="NorW"/>
    <property type="match status" value="1"/>
</dbReference>
<dbReference type="InterPro" id="IPR050260">
    <property type="entry name" value="FAD-bd_OxRdtase"/>
</dbReference>
<dbReference type="InterPro" id="IPR036188">
    <property type="entry name" value="FAD/NAD-bd_sf"/>
</dbReference>
<dbReference type="InterPro" id="IPR023753">
    <property type="entry name" value="FAD/NAD-binding_dom"/>
</dbReference>
<dbReference type="InterPro" id="IPR023961">
    <property type="entry name" value="NO_rdtase_NorW"/>
</dbReference>
<dbReference type="InterPro" id="IPR041364">
    <property type="entry name" value="Rbx-bd"/>
</dbReference>
<dbReference type="NCBIfam" id="NF003437">
    <property type="entry name" value="PRK04965.1"/>
    <property type="match status" value="1"/>
</dbReference>
<dbReference type="PANTHER" id="PTHR43429:SF3">
    <property type="entry name" value="NITRITE REDUCTASE [NAD(P)H]"/>
    <property type="match status" value="1"/>
</dbReference>
<dbReference type="PANTHER" id="PTHR43429">
    <property type="entry name" value="PYRIDINE NUCLEOTIDE-DISULFIDE OXIDOREDUCTASE DOMAIN-CONTAINING"/>
    <property type="match status" value="1"/>
</dbReference>
<dbReference type="Pfam" id="PF07992">
    <property type="entry name" value="Pyr_redox_2"/>
    <property type="match status" value="1"/>
</dbReference>
<dbReference type="Pfam" id="PF18113">
    <property type="entry name" value="Rbx_binding"/>
    <property type="match status" value="1"/>
</dbReference>
<dbReference type="PRINTS" id="PR00368">
    <property type="entry name" value="FADPNR"/>
</dbReference>
<dbReference type="PRINTS" id="PR00411">
    <property type="entry name" value="PNDRDTASEI"/>
</dbReference>
<dbReference type="SUPFAM" id="SSF51905">
    <property type="entry name" value="FAD/NAD(P)-binding domain"/>
    <property type="match status" value="1"/>
</dbReference>
<protein>
    <recommendedName>
        <fullName evidence="1">Nitric oxide reductase FlRd-NAD(+) reductase</fullName>
        <ecNumber evidence="1">1.18.1.-</ecNumber>
    </recommendedName>
    <alternativeName>
        <fullName evidence="1">Flavorubredoxin reductase</fullName>
        <shortName evidence="1">FlRd-reductase</shortName>
        <shortName evidence="1">FlavoRb reductase</shortName>
    </alternativeName>
</protein>
<keyword id="KW-0963">Cytoplasm</keyword>
<keyword id="KW-0274">FAD</keyword>
<keyword id="KW-0285">Flavoprotein</keyword>
<keyword id="KW-0520">NAD</keyword>
<keyword id="KW-0560">Oxidoreductase</keyword>
<keyword id="KW-1185">Reference proteome</keyword>
<name>NORW_PECAS</name>
<organism>
    <name type="scientific">Pectobacterium atrosepticum (strain SCRI 1043 / ATCC BAA-672)</name>
    <name type="common">Erwinia carotovora subsp. atroseptica</name>
    <dbReference type="NCBI Taxonomy" id="218491"/>
    <lineage>
        <taxon>Bacteria</taxon>
        <taxon>Pseudomonadati</taxon>
        <taxon>Pseudomonadota</taxon>
        <taxon>Gammaproteobacteria</taxon>
        <taxon>Enterobacterales</taxon>
        <taxon>Pectobacteriaceae</taxon>
        <taxon>Pectobacterium</taxon>
    </lineage>
</organism>
<comment type="function">
    <text evidence="1">One of at least two accessory proteins for anaerobic nitric oxide (NO) reductase. Reduces the rubredoxin moiety of NO reductase.</text>
</comment>
<comment type="catalytic activity">
    <reaction evidence="1">
        <text>2 reduced [nitric oxide reductase rubredoxin domain] + NAD(+) + H(+) = 2 oxidized [nitric oxide reductase rubredoxin domain] + NADH</text>
        <dbReference type="Rhea" id="RHEA:42960"/>
        <dbReference type="Rhea" id="RHEA-COMP:10304"/>
        <dbReference type="Rhea" id="RHEA-COMP:10305"/>
        <dbReference type="ChEBI" id="CHEBI:15378"/>
        <dbReference type="ChEBI" id="CHEBI:29033"/>
        <dbReference type="ChEBI" id="CHEBI:29034"/>
        <dbReference type="ChEBI" id="CHEBI:57540"/>
        <dbReference type="ChEBI" id="CHEBI:57945"/>
    </reaction>
</comment>
<comment type="cofactor">
    <cofactor evidence="1">
        <name>FAD</name>
        <dbReference type="ChEBI" id="CHEBI:57692"/>
    </cofactor>
</comment>
<comment type="pathway">
    <text evidence="1">Nitrogen metabolism; nitric oxide reduction.</text>
</comment>
<comment type="subcellular location">
    <subcellularLocation>
        <location evidence="1">Cytoplasm</location>
    </subcellularLocation>
</comment>
<comment type="similarity">
    <text evidence="1">Belongs to the FAD-dependent oxidoreductase family.</text>
</comment>
<sequence>MMKDIVIIGAGFAARQLIRQLRKLDAHCPIRLITADSGDEYNKPDLSHVMSLQQHADDLTKMQATAFAEENRIALQANTRVTAIDRNAQQVVCGTDRYDYHKLVFATGASAIVPPIPGREHMLTLNSQQEYRTHEARLWQAERVLVLGAGLIGTELAMDLSRAGKRVTLVDCASSILPALMPPEVSARLQFTLTQQGVSLLLNTTVQQLEKTETGVQARFTDGRTVEVDEIISAVGLQANTQLAKAADLAVQKGIQTNAQLQTPDPQIYALGDCAEIGGKLLPFLQPIQLSAITLAKNLLGASEALTLPPMLVKIKTPLFPLQMAGDTTGSDLHWQQEWNEQGMVAKALDSQQRLRAFVVGGERMKEAFPLLRQLSATI</sequence>
<gene>
    <name evidence="1" type="primary">norW</name>
    <name evidence="1" type="synonym">flrR</name>
    <name type="ordered locus">ECA0901</name>
</gene>
<feature type="chain" id="PRO_0000305605" description="Nitric oxide reductase FlRd-NAD(+) reductase">
    <location>
        <begin position="1"/>
        <end position="379"/>
    </location>
</feature>
<accession>Q6D8S1</accession>
<proteinExistence type="inferred from homology"/>